<feature type="signal peptide" evidence="1">
    <location>
        <begin position="1"/>
        <end position="28"/>
    </location>
</feature>
<feature type="chain" id="PRO_0000016872" description="Tissue factor pathway inhibitor">
    <location>
        <begin position="29"/>
        <end position="304"/>
    </location>
</feature>
<feature type="domain" description="BPTI/Kunitz inhibitor 1" evidence="3">
    <location>
        <begin position="54"/>
        <end position="104"/>
    </location>
</feature>
<feature type="domain" description="BPTI/Kunitz inhibitor 2" evidence="3">
    <location>
        <begin position="125"/>
        <end position="175"/>
    </location>
</feature>
<feature type="domain" description="BPTI/Kunitz inhibitor 3" evidence="3">
    <location>
        <begin position="217"/>
        <end position="267"/>
    </location>
</feature>
<feature type="site" description="Reactive bond" evidence="1">
    <location>
        <begin position="64"/>
        <end position="65"/>
    </location>
</feature>
<feature type="site" description="Reactive bond" evidence="1">
    <location>
        <begin position="135"/>
        <end position="136"/>
    </location>
</feature>
<feature type="site" description="Reactive bond" evidence="1">
    <location>
        <begin position="227"/>
        <end position="228"/>
    </location>
</feature>
<feature type="glycosylation site" description="N-linked (GlcNAc...) asparagine" evidence="2">
    <location>
        <position position="145"/>
    </location>
</feature>
<feature type="glycosylation site" description="N-linked (GlcNAc...) asparagine" evidence="2">
    <location>
        <position position="195"/>
    </location>
</feature>
<feature type="glycosylation site" description="N-linked (GlcNAc...) asparagine" evidence="2">
    <location>
        <position position="256"/>
    </location>
</feature>
<feature type="disulfide bond" evidence="3">
    <location>
        <begin position="54"/>
        <end position="104"/>
    </location>
</feature>
<feature type="disulfide bond" evidence="3">
    <location>
        <begin position="63"/>
        <end position="87"/>
    </location>
</feature>
<feature type="disulfide bond" evidence="3">
    <location>
        <begin position="79"/>
        <end position="100"/>
    </location>
</feature>
<feature type="disulfide bond" evidence="3">
    <location>
        <begin position="125"/>
        <end position="175"/>
    </location>
</feature>
<feature type="disulfide bond" evidence="3">
    <location>
        <begin position="134"/>
        <end position="158"/>
    </location>
</feature>
<feature type="disulfide bond" evidence="3">
    <location>
        <begin position="150"/>
        <end position="171"/>
    </location>
</feature>
<feature type="disulfide bond" evidence="3">
    <location>
        <begin position="217"/>
        <end position="267"/>
    </location>
</feature>
<feature type="disulfide bond" evidence="3">
    <location>
        <begin position="226"/>
        <end position="250"/>
    </location>
</feature>
<feature type="disulfide bond" evidence="3">
    <location>
        <begin position="242"/>
        <end position="263"/>
    </location>
</feature>
<keyword id="KW-0094">Blood coagulation</keyword>
<keyword id="KW-1015">Disulfide bond</keyword>
<keyword id="KW-0325">Glycoprotein</keyword>
<keyword id="KW-0356">Hemostasis</keyword>
<keyword id="KW-0646">Protease inhibitor</keyword>
<keyword id="KW-1185">Reference proteome</keyword>
<keyword id="KW-0677">Repeat</keyword>
<keyword id="KW-0964">Secreted</keyword>
<keyword id="KW-0722">Serine protease inhibitor</keyword>
<keyword id="KW-0732">Signal</keyword>
<sequence>MIYTMKKVHALWVSICLMLNLAPAPLNADSEEDEEYTIITDTELPPLKLMHSFCAFKPDDGPCKAIMKRFFFNIFTRQCEEFIYGGCGGNQNRFESMEECKKVCTRDNVHRIIQTALQQEKPDFCFLEEDPGICRGYITRYFYNNQSKQCERFKYGGCLGNMNNFETLEECKNTCEDGLNGFQVDNYGTQLNAVNNSQTPQSTKVPSFFEFHGPSWCLAPADRGLCRANENRFYYNSVIGKCRPFKYSGCGGNENNFTSKRECLRACKKGFIQRISKGGLIKTKRKRKKQRVKIAYEEVFVKNM</sequence>
<dbReference type="EMBL" id="S73337">
    <property type="protein sequence ID" value="AAB31955.1"/>
    <property type="molecule type" value="mRNA"/>
</dbReference>
<dbReference type="PIR" id="JC2264">
    <property type="entry name" value="JC2264"/>
</dbReference>
<dbReference type="RefSeq" id="NP_001181951.1">
    <property type="nucleotide sequence ID" value="NM_001195022.1"/>
</dbReference>
<dbReference type="SMR" id="Q28864"/>
<dbReference type="FunCoup" id="Q28864">
    <property type="interactions" value="251"/>
</dbReference>
<dbReference type="STRING" id="9544.ENSMMUP00000067285"/>
<dbReference type="MEROPS" id="I02.012"/>
<dbReference type="GlyCosmos" id="Q28864">
    <property type="glycosylation" value="3 sites, No reported glycans"/>
</dbReference>
<dbReference type="PaxDb" id="9544-ENSMMUP00000012353"/>
<dbReference type="GeneID" id="613026"/>
<dbReference type="KEGG" id="mcc:613026"/>
<dbReference type="CTD" id="7035"/>
<dbReference type="eggNOG" id="KOG4295">
    <property type="taxonomic scope" value="Eukaryota"/>
</dbReference>
<dbReference type="HOGENOM" id="CLU_058441_2_0_1"/>
<dbReference type="InParanoid" id="Q28864"/>
<dbReference type="OrthoDB" id="5950222at2759"/>
<dbReference type="TreeFam" id="TF315349"/>
<dbReference type="Proteomes" id="UP000006718">
    <property type="component" value="Unassembled WGS sequence"/>
</dbReference>
<dbReference type="GO" id="GO:0005615">
    <property type="term" value="C:extracellular space"/>
    <property type="evidence" value="ECO:0000318"/>
    <property type="project" value="GO_Central"/>
</dbReference>
<dbReference type="GO" id="GO:0004867">
    <property type="term" value="F:serine-type endopeptidase inhibitor activity"/>
    <property type="evidence" value="ECO:0000318"/>
    <property type="project" value="GO_Central"/>
</dbReference>
<dbReference type="GO" id="GO:0007596">
    <property type="term" value="P:blood coagulation"/>
    <property type="evidence" value="ECO:0007669"/>
    <property type="project" value="UniProtKB-KW"/>
</dbReference>
<dbReference type="CDD" id="cd22613">
    <property type="entry name" value="Kunitz_TFPI1_1-like"/>
    <property type="match status" value="1"/>
</dbReference>
<dbReference type="CDD" id="cd22614">
    <property type="entry name" value="Kunitz_TFPI1_2-like"/>
    <property type="match status" value="1"/>
</dbReference>
<dbReference type="CDD" id="cd22615">
    <property type="entry name" value="Kunitz_TFPI1_TFPI2_3-like"/>
    <property type="match status" value="1"/>
</dbReference>
<dbReference type="FunFam" id="4.10.410.10:FF:000004">
    <property type="entry name" value="Tissue factor pathway inhibitor"/>
    <property type="match status" value="1"/>
</dbReference>
<dbReference type="FunFam" id="4.10.410.10:FF:000012">
    <property type="entry name" value="Tissue factor pathway inhibitor"/>
    <property type="match status" value="1"/>
</dbReference>
<dbReference type="FunFam" id="4.10.410.10:FF:000013">
    <property type="entry name" value="Tissue factor pathway inhibitor"/>
    <property type="match status" value="1"/>
</dbReference>
<dbReference type="Gene3D" id="4.10.410.10">
    <property type="entry name" value="Pancreatic trypsin inhibitor Kunitz domain"/>
    <property type="match status" value="3"/>
</dbReference>
<dbReference type="InterPro" id="IPR002223">
    <property type="entry name" value="Kunitz_BPTI"/>
</dbReference>
<dbReference type="InterPro" id="IPR036880">
    <property type="entry name" value="Kunitz_BPTI_sf"/>
</dbReference>
<dbReference type="InterPro" id="IPR020901">
    <property type="entry name" value="Prtase_inh_Kunz-CS"/>
</dbReference>
<dbReference type="InterPro" id="IPR008296">
    <property type="entry name" value="TFPI-like"/>
</dbReference>
<dbReference type="InterPro" id="IPR050098">
    <property type="entry name" value="TFPI/VKTCI-like"/>
</dbReference>
<dbReference type="PANTHER" id="PTHR10083:SF374">
    <property type="entry name" value="BPTI_KUNITZ INHIBITOR DOMAIN-CONTAINING PROTEIN"/>
    <property type="match status" value="1"/>
</dbReference>
<dbReference type="PANTHER" id="PTHR10083">
    <property type="entry name" value="KUNITZ-TYPE PROTEASE INHIBITOR-RELATED"/>
    <property type="match status" value="1"/>
</dbReference>
<dbReference type="Pfam" id="PF00014">
    <property type="entry name" value="Kunitz_BPTI"/>
    <property type="match status" value="3"/>
</dbReference>
<dbReference type="PIRSF" id="PIRSF001620">
    <property type="entry name" value="TFPI"/>
    <property type="match status" value="1"/>
</dbReference>
<dbReference type="PRINTS" id="PR00759">
    <property type="entry name" value="BASICPTASE"/>
</dbReference>
<dbReference type="SMART" id="SM00131">
    <property type="entry name" value="KU"/>
    <property type="match status" value="3"/>
</dbReference>
<dbReference type="SUPFAM" id="SSF57362">
    <property type="entry name" value="BPTI-like"/>
    <property type="match status" value="3"/>
</dbReference>
<dbReference type="PROSITE" id="PS00280">
    <property type="entry name" value="BPTI_KUNITZ_1"/>
    <property type="match status" value="3"/>
</dbReference>
<dbReference type="PROSITE" id="PS50279">
    <property type="entry name" value="BPTI_KUNITZ_2"/>
    <property type="match status" value="3"/>
</dbReference>
<name>TFPI1_MACMU</name>
<comment type="function">
    <text>Inhibits factor X (X(a)) directly and, in a Xa-dependent way, inhibits VIIa/tissue factor activity, presumably by forming a quaternary Xa/LACI/VIIa/TF complex. It possesses an antithrombotic action and also the ability to associate with lipoproteins in plasma.</text>
</comment>
<comment type="subcellular location">
    <subcellularLocation>
        <location>Secreted</location>
    </subcellularLocation>
</comment>
<comment type="domain">
    <text evidence="1">This inhibitor contains three inhibitory domains. The first domain interacts with VIIa and TF, the second one with Xa (By similarity).</text>
</comment>
<comment type="PTM">
    <text evidence="1">O-glycosylated.</text>
</comment>
<accession>Q28864</accession>
<organism>
    <name type="scientific">Macaca mulatta</name>
    <name type="common">Rhesus macaque</name>
    <dbReference type="NCBI Taxonomy" id="9544"/>
    <lineage>
        <taxon>Eukaryota</taxon>
        <taxon>Metazoa</taxon>
        <taxon>Chordata</taxon>
        <taxon>Craniata</taxon>
        <taxon>Vertebrata</taxon>
        <taxon>Euteleostomi</taxon>
        <taxon>Mammalia</taxon>
        <taxon>Eutheria</taxon>
        <taxon>Euarchontoglires</taxon>
        <taxon>Primates</taxon>
        <taxon>Haplorrhini</taxon>
        <taxon>Catarrhini</taxon>
        <taxon>Cercopithecidae</taxon>
        <taxon>Cercopithecinae</taxon>
        <taxon>Macaca</taxon>
    </lineage>
</organism>
<evidence type="ECO:0000250" key="1"/>
<evidence type="ECO:0000255" key="2"/>
<evidence type="ECO:0000255" key="3">
    <source>
        <dbReference type="PROSITE-ProRule" id="PRU00031"/>
    </source>
</evidence>
<gene>
    <name type="primary">TFPI</name>
    <name type="synonym">TFPI1</name>
</gene>
<protein>
    <recommendedName>
        <fullName>Tissue factor pathway inhibitor</fullName>
        <shortName>TFPI</shortName>
    </recommendedName>
    <alternativeName>
        <fullName>Extrinsic pathway inhibitor</fullName>
        <shortName>EPI</shortName>
    </alternativeName>
    <alternativeName>
        <fullName>Lipoprotein-associated coagulation inhibitor</fullName>
        <shortName>LACI</shortName>
    </alternativeName>
</protein>
<proteinExistence type="evidence at transcript level"/>
<reference key="1">
    <citation type="journal article" date="1994" name="J. Biochem.">
        <title>Amino acid sequence and inhibitory activity of rhesus monkey tissue factor pathway inhibitor (TFPI): comparison with human TFPI.</title>
        <authorList>
            <person name="Kamei S."/>
            <person name="Kamikubo Y."/>
            <person name="Hamuro T."/>
            <person name="Fujimoto H."/>
            <person name="Ishihara M."/>
            <person name="Yonemura H."/>
            <person name="Miyamoto S."/>
            <person name="Funatsu A."/>
            <person name="Enjyoji K."/>
            <person name="Abumiya T."/>
        </authorList>
    </citation>
    <scope>NUCLEOTIDE SEQUENCE [MRNA]</scope>
    <source>
        <tissue>Liver</tissue>
    </source>
</reference>